<keyword id="KW-0131">Cell cycle</keyword>
<keyword id="KW-0132">Cell division</keyword>
<keyword id="KW-0574">Periplasm</keyword>
<keyword id="KW-0732">Signal</keyword>
<gene>
    <name evidence="1" type="primary">ftsP</name>
    <name type="ordered locus">HSM_1771</name>
</gene>
<sequence>MRSLTRRDFLKSGILASSLSCIPQSVMAASRLPLFIPPLLEAKRGRPIFLTMQAAQTSFIEKKLTEVWGFNGHHLGPTVRVEQGDFVKLNYRNNLTQAVAMNIQGLQAHSELIGGIGRVLKAGEGWAPILPITQPASTCFYHACTLANSAYQTYRGLVGMWIINDKDTHQSKLPKKYGVDDIPLILQDVLLNSKGEQVFQNQPHFLGERLLVNGVEAPYLNVPKGLVRLRLLNASLSRSYDLTFDDERAFFLIAREQGYLPQTKIVKKVSLAPSERVELLVDLSEGGNVTLITGSKRNLLNKIGTIFSSDMLVDNVIVELRTEGVKSVFYNPSHWQFHTDAPSLLAKKNMKTREFYFDVSNATINQQRFEPNRIDISTKRGQIERWILSSSRPVGFKIQGARFVMKSINDQPVEQSDIAWKDSLWIDGKVEILVQFNHASSTKFPFIFGSSDLVLADQGCLGSIVVQ</sequence>
<dbReference type="EMBL" id="CP000947">
    <property type="protein sequence ID" value="ACA31553.1"/>
    <property type="molecule type" value="Genomic_DNA"/>
</dbReference>
<dbReference type="RefSeq" id="WP_012340876.1">
    <property type="nucleotide sequence ID" value="NC_010519.1"/>
</dbReference>
<dbReference type="SMR" id="B0UVZ0"/>
<dbReference type="STRING" id="228400.HSM_1771"/>
<dbReference type="GeneID" id="31488078"/>
<dbReference type="KEGG" id="hsm:HSM_1771"/>
<dbReference type="HOGENOM" id="CLU_009100_2_4_6"/>
<dbReference type="GO" id="GO:0032153">
    <property type="term" value="C:cell division site"/>
    <property type="evidence" value="ECO:0007669"/>
    <property type="project" value="UniProtKB-UniRule"/>
</dbReference>
<dbReference type="GO" id="GO:0030288">
    <property type="term" value="C:outer membrane-bounded periplasmic space"/>
    <property type="evidence" value="ECO:0007669"/>
    <property type="project" value="UniProtKB-UniRule"/>
</dbReference>
<dbReference type="GO" id="GO:0005507">
    <property type="term" value="F:copper ion binding"/>
    <property type="evidence" value="ECO:0007669"/>
    <property type="project" value="InterPro"/>
</dbReference>
<dbReference type="GO" id="GO:0043093">
    <property type="term" value="P:FtsZ-dependent cytokinesis"/>
    <property type="evidence" value="ECO:0007669"/>
    <property type="project" value="UniProtKB-UniRule"/>
</dbReference>
<dbReference type="CDD" id="cd04232">
    <property type="entry name" value="CuRO_1_CueO_FtsP"/>
    <property type="match status" value="1"/>
</dbReference>
<dbReference type="CDD" id="cd13867">
    <property type="entry name" value="CuRO_2_CueO_FtsP"/>
    <property type="match status" value="1"/>
</dbReference>
<dbReference type="Gene3D" id="2.60.40.420">
    <property type="entry name" value="Cupredoxins - blue copper proteins"/>
    <property type="match status" value="3"/>
</dbReference>
<dbReference type="HAMAP" id="MF_00915">
    <property type="entry name" value="FtsP"/>
    <property type="match status" value="1"/>
</dbReference>
<dbReference type="InterPro" id="IPR011707">
    <property type="entry name" value="Cu-oxidase-like_N"/>
</dbReference>
<dbReference type="InterPro" id="IPR045087">
    <property type="entry name" value="Cu-oxidase_fam"/>
</dbReference>
<dbReference type="InterPro" id="IPR008972">
    <property type="entry name" value="Cupredoxin"/>
</dbReference>
<dbReference type="InterPro" id="IPR026589">
    <property type="entry name" value="FtsP"/>
</dbReference>
<dbReference type="PANTHER" id="PTHR48267:SF1">
    <property type="entry name" value="BILIRUBIN OXIDASE"/>
    <property type="match status" value="1"/>
</dbReference>
<dbReference type="PANTHER" id="PTHR48267">
    <property type="entry name" value="CUPREDOXIN SUPERFAMILY PROTEIN"/>
    <property type="match status" value="1"/>
</dbReference>
<dbReference type="Pfam" id="PF07732">
    <property type="entry name" value="Cu-oxidase_3"/>
    <property type="match status" value="1"/>
</dbReference>
<dbReference type="SUPFAM" id="SSF49503">
    <property type="entry name" value="Cupredoxins"/>
    <property type="match status" value="3"/>
</dbReference>
<accession>B0UVZ0</accession>
<reference key="1">
    <citation type="submission" date="2008-02" db="EMBL/GenBank/DDBJ databases">
        <title>Complete sequence of Haemophilus somnus 2336.</title>
        <authorList>
            <consortium name="US DOE Joint Genome Institute"/>
            <person name="Siddaramappa S."/>
            <person name="Duncan A.J."/>
            <person name="Challacombe J.F."/>
            <person name="Rainey D."/>
            <person name="Gillaspy A.F."/>
            <person name="Carson M."/>
            <person name="Gipson J."/>
            <person name="Gipson M."/>
            <person name="Bruce D."/>
            <person name="Detter J.C."/>
            <person name="Han C.S."/>
            <person name="Land M."/>
            <person name="Tapia R."/>
            <person name="Thompson L.S."/>
            <person name="Orvis J."/>
            <person name="Zaitshik J."/>
            <person name="Barnes G."/>
            <person name="Brettin T.S."/>
            <person name="Dyer D.W."/>
            <person name="Inzana T.J."/>
        </authorList>
    </citation>
    <scope>NUCLEOTIDE SEQUENCE [LARGE SCALE GENOMIC DNA]</scope>
    <source>
        <strain>2336</strain>
    </source>
</reference>
<protein>
    <recommendedName>
        <fullName evidence="1">Cell division protein FtsP</fullName>
    </recommendedName>
</protein>
<name>FTSP_HISS2</name>
<proteinExistence type="inferred from homology"/>
<evidence type="ECO:0000255" key="1">
    <source>
        <dbReference type="HAMAP-Rule" id="MF_00915"/>
    </source>
</evidence>
<feature type="signal peptide" description="Tat-type signal" evidence="1">
    <location>
        <begin position="1"/>
        <end position="28"/>
    </location>
</feature>
<feature type="chain" id="PRO_5000311171" description="Cell division protein FtsP">
    <location>
        <begin position="29"/>
        <end position="467"/>
    </location>
</feature>
<organism>
    <name type="scientific">Histophilus somni (strain 2336)</name>
    <name type="common">Haemophilus somnus</name>
    <dbReference type="NCBI Taxonomy" id="228400"/>
    <lineage>
        <taxon>Bacteria</taxon>
        <taxon>Pseudomonadati</taxon>
        <taxon>Pseudomonadota</taxon>
        <taxon>Gammaproteobacteria</taxon>
        <taxon>Pasteurellales</taxon>
        <taxon>Pasteurellaceae</taxon>
        <taxon>Histophilus</taxon>
    </lineage>
</organism>
<comment type="function">
    <text evidence="1">Cell division protein that is required for growth during stress conditions. May be involved in protecting or stabilizing the divisomal assembly under conditions of stress.</text>
</comment>
<comment type="subcellular location">
    <subcellularLocation>
        <location evidence="1">Periplasm</location>
    </subcellularLocation>
    <text evidence="1">Localizes to the division septum.</text>
</comment>
<comment type="PTM">
    <text>Predicted to be exported by the Tat system. The position of the signal peptide cleavage has not been experimentally proven.</text>
</comment>
<comment type="similarity">
    <text evidence="1">Belongs to the FtsP family.</text>
</comment>